<feature type="chain" id="PRO_0000292208" description="Zinc finger protein 703">
    <location>
        <begin position="1"/>
        <end position="589"/>
    </location>
</feature>
<feature type="zinc finger region" description="C2H2-type" evidence="2">
    <location>
        <begin position="462"/>
        <end position="490"/>
    </location>
</feature>
<feature type="region of interest" description="Disordered" evidence="3">
    <location>
        <begin position="102"/>
        <end position="315"/>
    </location>
</feature>
<feature type="region of interest" description="Required for interaction with Groucho and hdac2 plays an important role in repression of transcription">
    <location>
        <begin position="408"/>
        <end position="460"/>
    </location>
</feature>
<feature type="region of interest" description="Required for self-association and nuclear localization">
    <location>
        <begin position="498"/>
        <end position="589"/>
    </location>
</feature>
<feature type="compositionally biased region" description="Low complexity" evidence="3">
    <location>
        <begin position="113"/>
        <end position="122"/>
    </location>
</feature>
<feature type="compositionally biased region" description="Basic and acidic residues" evidence="3">
    <location>
        <begin position="137"/>
        <end position="148"/>
    </location>
</feature>
<feature type="compositionally biased region" description="Polar residues" evidence="3">
    <location>
        <begin position="179"/>
        <end position="188"/>
    </location>
</feature>
<feature type="compositionally biased region" description="Low complexity" evidence="3">
    <location>
        <begin position="196"/>
        <end position="206"/>
    </location>
</feature>
<feature type="compositionally biased region" description="Polar residues" evidence="3">
    <location>
        <begin position="214"/>
        <end position="230"/>
    </location>
</feature>
<feature type="compositionally biased region" description="Low complexity" evidence="3">
    <location>
        <begin position="237"/>
        <end position="250"/>
    </location>
</feature>
<feature type="compositionally biased region" description="Basic and acidic residues" evidence="3">
    <location>
        <begin position="251"/>
        <end position="262"/>
    </location>
</feature>
<feature type="compositionally biased region" description="Low complexity" evidence="3">
    <location>
        <begin position="272"/>
        <end position="299"/>
    </location>
</feature>
<feature type="splice variant" id="VSP_026399" description="In isoform 2." evidence="10">
    <location>
        <begin position="1"/>
        <end position="60"/>
    </location>
</feature>
<feature type="mutagenesis site" description="Abrogates initiation of translation of isoform 2." evidence="7">
    <original>M</original>
    <variation>G</variation>
    <location>
        <position position="61"/>
    </location>
</feature>
<feature type="sequence conflict" description="In Ref. 2; AAK08969." evidence="10" ref="2">
    <original>A</original>
    <variation>T</variation>
    <location>
        <position position="339"/>
    </location>
</feature>
<gene>
    <name type="primary">znf703</name>
    <name type="synonym">nlz</name>
    <name type="synonym">nlz1</name>
    <name type="synonym">noz1</name>
    <name type="ORF">si:dkey-158j20.1</name>
</gene>
<reference key="1">
    <citation type="journal article" date="2001" name="Dev. Dyn.">
        <title>Isolation and characterization of posteriorly restricted genes in the zebrafish gastrula.</title>
        <authorList>
            <person name="Sagerstroem C.G."/>
            <person name="Kao B.A."/>
            <person name="Lane M.E."/>
            <person name="Sive H."/>
        </authorList>
    </citation>
    <scope>NUCLEOTIDE SEQUENCE [MRNA]</scope>
    <scope>DEVELOPMENTAL STAGE</scope>
</reference>
<reference key="2">
    <citation type="journal article" date="2001" name="Mech. Dev.">
        <title>Cloning and expression of noz1, a zebrafish zinc finger gene related to Drosophila nocA.</title>
        <authorList>
            <person name="Andreazzoli M."/>
            <person name="Broccoli V."/>
            <person name="Dawid I.B."/>
        </authorList>
    </citation>
    <scope>NUCLEOTIDE SEQUENCE [MRNA]</scope>
    <scope>DEVELOPMENTAL STAGE</scope>
</reference>
<reference key="3">
    <citation type="journal article" date="2013" name="Nature">
        <title>The zebrafish reference genome sequence and its relationship to the human genome.</title>
        <authorList>
            <person name="Howe K."/>
            <person name="Clark M.D."/>
            <person name="Torroja C.F."/>
            <person name="Torrance J."/>
            <person name="Berthelot C."/>
            <person name="Muffato M."/>
            <person name="Collins J.E."/>
            <person name="Humphray S."/>
            <person name="McLaren K."/>
            <person name="Matthews L."/>
            <person name="McLaren S."/>
            <person name="Sealy I."/>
            <person name="Caccamo M."/>
            <person name="Churcher C."/>
            <person name="Scott C."/>
            <person name="Barrett J.C."/>
            <person name="Koch R."/>
            <person name="Rauch G.J."/>
            <person name="White S."/>
            <person name="Chow W."/>
            <person name="Kilian B."/>
            <person name="Quintais L.T."/>
            <person name="Guerra-Assuncao J.A."/>
            <person name="Zhou Y."/>
            <person name="Gu Y."/>
            <person name="Yen J."/>
            <person name="Vogel J.H."/>
            <person name="Eyre T."/>
            <person name="Redmond S."/>
            <person name="Banerjee R."/>
            <person name="Chi J."/>
            <person name="Fu B."/>
            <person name="Langley E."/>
            <person name="Maguire S.F."/>
            <person name="Laird G.K."/>
            <person name="Lloyd D."/>
            <person name="Kenyon E."/>
            <person name="Donaldson S."/>
            <person name="Sehra H."/>
            <person name="Almeida-King J."/>
            <person name="Loveland J."/>
            <person name="Trevanion S."/>
            <person name="Jones M."/>
            <person name="Quail M."/>
            <person name="Willey D."/>
            <person name="Hunt A."/>
            <person name="Burton J."/>
            <person name="Sims S."/>
            <person name="McLay K."/>
            <person name="Plumb B."/>
            <person name="Davis J."/>
            <person name="Clee C."/>
            <person name="Oliver K."/>
            <person name="Clark R."/>
            <person name="Riddle C."/>
            <person name="Elliot D."/>
            <person name="Threadgold G."/>
            <person name="Harden G."/>
            <person name="Ware D."/>
            <person name="Begum S."/>
            <person name="Mortimore B."/>
            <person name="Kerry G."/>
            <person name="Heath P."/>
            <person name="Phillimore B."/>
            <person name="Tracey A."/>
            <person name="Corby N."/>
            <person name="Dunn M."/>
            <person name="Johnson C."/>
            <person name="Wood J."/>
            <person name="Clark S."/>
            <person name="Pelan S."/>
            <person name="Griffiths G."/>
            <person name="Smith M."/>
            <person name="Glithero R."/>
            <person name="Howden P."/>
            <person name="Barker N."/>
            <person name="Lloyd C."/>
            <person name="Stevens C."/>
            <person name="Harley J."/>
            <person name="Holt K."/>
            <person name="Panagiotidis G."/>
            <person name="Lovell J."/>
            <person name="Beasley H."/>
            <person name="Henderson C."/>
            <person name="Gordon D."/>
            <person name="Auger K."/>
            <person name="Wright D."/>
            <person name="Collins J."/>
            <person name="Raisen C."/>
            <person name="Dyer L."/>
            <person name="Leung K."/>
            <person name="Robertson L."/>
            <person name="Ambridge K."/>
            <person name="Leongamornlert D."/>
            <person name="McGuire S."/>
            <person name="Gilderthorp R."/>
            <person name="Griffiths C."/>
            <person name="Manthravadi D."/>
            <person name="Nichol S."/>
            <person name="Barker G."/>
            <person name="Whitehead S."/>
            <person name="Kay M."/>
            <person name="Brown J."/>
            <person name="Murnane C."/>
            <person name="Gray E."/>
            <person name="Humphries M."/>
            <person name="Sycamore N."/>
            <person name="Barker D."/>
            <person name="Saunders D."/>
            <person name="Wallis J."/>
            <person name="Babbage A."/>
            <person name="Hammond S."/>
            <person name="Mashreghi-Mohammadi M."/>
            <person name="Barr L."/>
            <person name="Martin S."/>
            <person name="Wray P."/>
            <person name="Ellington A."/>
            <person name="Matthews N."/>
            <person name="Ellwood M."/>
            <person name="Woodmansey R."/>
            <person name="Clark G."/>
            <person name="Cooper J."/>
            <person name="Tromans A."/>
            <person name="Grafham D."/>
            <person name="Skuce C."/>
            <person name="Pandian R."/>
            <person name="Andrews R."/>
            <person name="Harrison E."/>
            <person name="Kimberley A."/>
            <person name="Garnett J."/>
            <person name="Fosker N."/>
            <person name="Hall R."/>
            <person name="Garner P."/>
            <person name="Kelly D."/>
            <person name="Bird C."/>
            <person name="Palmer S."/>
            <person name="Gehring I."/>
            <person name="Berger A."/>
            <person name="Dooley C.M."/>
            <person name="Ersan-Urun Z."/>
            <person name="Eser C."/>
            <person name="Geiger H."/>
            <person name="Geisler M."/>
            <person name="Karotki L."/>
            <person name="Kirn A."/>
            <person name="Konantz J."/>
            <person name="Konantz M."/>
            <person name="Oberlander M."/>
            <person name="Rudolph-Geiger S."/>
            <person name="Teucke M."/>
            <person name="Lanz C."/>
            <person name="Raddatz G."/>
            <person name="Osoegawa K."/>
            <person name="Zhu B."/>
            <person name="Rapp A."/>
            <person name="Widaa S."/>
            <person name="Langford C."/>
            <person name="Yang F."/>
            <person name="Schuster S.C."/>
            <person name="Carter N.P."/>
            <person name="Harrow J."/>
            <person name="Ning Z."/>
            <person name="Herrero J."/>
            <person name="Searle S.M."/>
            <person name="Enright A."/>
            <person name="Geisler R."/>
            <person name="Plasterk R.H."/>
            <person name="Lee C."/>
            <person name="Westerfield M."/>
            <person name="de Jong P.J."/>
            <person name="Zon L.I."/>
            <person name="Postlethwait J.H."/>
            <person name="Nusslein-Volhard C."/>
            <person name="Hubbard T.J."/>
            <person name="Roest Crollius H."/>
            <person name="Rogers J."/>
            <person name="Stemple D.L."/>
        </authorList>
    </citation>
    <scope>NUCLEOTIDE SEQUENCE [LARGE SCALE GENOMIC DNA]</scope>
    <source>
        <strain>Tuebingen</strain>
    </source>
</reference>
<reference key="4">
    <citation type="submission" date="2005-05" db="EMBL/GenBank/DDBJ databases">
        <authorList>
            <consortium name="NIH - Zebrafish Gene Collection (ZGC) project"/>
        </authorList>
    </citation>
    <scope>NUCLEOTIDE SEQUENCE [LARGE SCALE MRNA]</scope>
    <source>
        <tissue>Olfactory epithelium</tissue>
    </source>
</reference>
<reference key="5">
    <citation type="journal article" date="2003" name="Dev. Biol.">
        <title>Nlz belongs to a family of zinc-finger-containing repressors and controls segmental gene expression in the zebrafish hindbrain.</title>
        <authorList>
            <person name="Runko A.P."/>
            <person name="Sagerstroem C.G."/>
        </authorList>
    </citation>
    <scope>FUNCTION</scope>
    <scope>INTERACTION WITH GROUCHO</scope>
    <scope>SUBCELLULAR LOCATION</scope>
    <scope>DEVELOPMENTAL STAGE</scope>
</reference>
<reference key="6">
    <citation type="journal article" date="2004" name="Dev. Dyn.">
        <title>nlz gene family is required for hindbrain patterning in the zebrafish.</title>
        <authorList>
            <person name="Hoyle J."/>
            <person name="Tang Y.P."/>
            <person name="Wiellette E.L."/>
            <person name="Wardle F.C."/>
            <person name="Sive H."/>
        </authorList>
    </citation>
    <scope>FUNCTION</scope>
    <scope>DEVELOPMENTAL STAGE</scope>
</reference>
<reference key="7">
    <citation type="journal article" date="2004" name="J. Biol. Chem.">
        <title>Isolation of nlz2 and characterization of essential domains in Nlz family proteins.</title>
        <authorList>
            <person name="Runko A.P."/>
            <person name="Sagerstroem C.G."/>
        </authorList>
    </citation>
    <scope>FUNCTION</scope>
    <scope>SELF-ASSOCIATION</scope>
    <scope>INTERACTION WITH NLZ2</scope>
    <scope>SUBCELLULAR LOCATION</scope>
    <scope>ALTERNATIVE INITIATION</scope>
    <scope>MUTAGENESIS OF MET-61</scope>
</reference>
<reference key="8">
    <citation type="journal article" date="2008" name="BMC Dev. Biol.">
        <title>Nlz1/Znf703 acts as a repressor of transcription.</title>
        <authorList>
            <person name="Nakamura M."/>
            <person name="Choe S.K."/>
            <person name="Runko A.P."/>
            <person name="Gardner P.D."/>
            <person name="Sagerstroem C.G."/>
        </authorList>
    </citation>
    <scope>FUNCTION</scope>
</reference>
<protein>
    <recommendedName>
        <fullName>Zinc finger protein 703</fullName>
    </recommendedName>
    <alternativeName>
        <fullName>NocA-like zinc finger protein 1</fullName>
    </alternativeName>
    <alternativeName>
        <fullName>NocA-related zinc finger protein 1</fullName>
    </alternativeName>
</protein>
<proteinExistence type="evidence at protein level"/>
<sequence>MSELPPGFAVSPRNQQTFKSHYITNDSSPTCLGLQVDSIASLPYRDPARQEKRLPIRILKMLTAHTSHILHPEYLQPLSSAPVSIELDAKKSPLALLAQTCSQIGKPDPPPSSKLGSLSSSSHGDKDSRSSSSSLKSGEHQNLDDKSSFKPYSKTGSECRKEGAGINSSADKAGFRVPNGSSSSVTCTSLPPHAPSPRASSPQQTSGQSHTHRQSQSPLSQKTAHLQTTHMDSKAAGSDPGNDSSSSGSDRNGKKDSDHNKSSLDVVQIANSSHARASVNSSSASSSSSPQPDSKTDSQPPQPSLGTGHIAPVSPFKPGHSVFPLPSSTMGYHGSIVGAYTGYPSQFVPGLDPAKSSLGMGVPGKHPSSSPLTGASPPSFMQGLCRDPYCLTYPNAPHLGGSNCSSCVHDPSSALKSGFPLMYPTHHLHSLHPSSLSSSATSSLSHPLYTYGFMLPNETLPHACNWVSVGGPCDKRFATSEELLAHLRTHTALPGVDGKLLSGYPSSVSSAASCHLHLPPPSSPGALPSSLSLRGSPGLGLARYHPYGKAHLPGAPSLPMHSLPATAPYYSPYALYSQRLGSASALGYQ</sequence>
<name>ZN703_DANRE</name>
<accession>Q90ZE2</accession>
<accession>Q90YM7</accession>
<organism>
    <name type="scientific">Danio rerio</name>
    <name type="common">Zebrafish</name>
    <name type="synonym">Brachydanio rerio</name>
    <dbReference type="NCBI Taxonomy" id="7955"/>
    <lineage>
        <taxon>Eukaryota</taxon>
        <taxon>Metazoa</taxon>
        <taxon>Chordata</taxon>
        <taxon>Craniata</taxon>
        <taxon>Vertebrata</taxon>
        <taxon>Euteleostomi</taxon>
        <taxon>Actinopterygii</taxon>
        <taxon>Neopterygii</taxon>
        <taxon>Teleostei</taxon>
        <taxon>Ostariophysi</taxon>
        <taxon>Cypriniformes</taxon>
        <taxon>Danionidae</taxon>
        <taxon>Danioninae</taxon>
        <taxon>Danio</taxon>
    </lineage>
</organism>
<evidence type="ECO:0000250" key="1"/>
<evidence type="ECO:0000255" key="2">
    <source>
        <dbReference type="PROSITE-ProRule" id="PRU00042"/>
    </source>
</evidence>
<evidence type="ECO:0000256" key="3">
    <source>
        <dbReference type="SAM" id="MobiDB-lite"/>
    </source>
</evidence>
<evidence type="ECO:0000269" key="4">
    <source>
    </source>
</evidence>
<evidence type="ECO:0000269" key="5">
    <source>
    </source>
</evidence>
<evidence type="ECO:0000269" key="6">
    <source>
    </source>
</evidence>
<evidence type="ECO:0000269" key="7">
    <source>
    </source>
</evidence>
<evidence type="ECO:0000269" key="8">
    <source>
    </source>
</evidence>
<evidence type="ECO:0000269" key="9">
    <source>
    </source>
</evidence>
<evidence type="ECO:0000305" key="10"/>
<keyword id="KW-0024">Alternative initiation</keyword>
<keyword id="KW-0963">Cytoplasm</keyword>
<keyword id="KW-0217">Developmental protein</keyword>
<keyword id="KW-0479">Metal-binding</keyword>
<keyword id="KW-0539">Nucleus</keyword>
<keyword id="KW-1185">Reference proteome</keyword>
<keyword id="KW-0678">Repressor</keyword>
<keyword id="KW-0804">Transcription</keyword>
<keyword id="KW-0805">Transcription regulation</keyword>
<keyword id="KW-0862">Zinc</keyword>
<keyword id="KW-0863">Zinc-finger</keyword>
<comment type="function">
    <text evidence="6 7 8 9">Transcriptional corepressor which does not bind directly to DNA and may regulate transcription through recruitment of histone deacetylases to gene promoters. Required for segmental gene expression during hindbrain development. May regulate cell adhesion, migration and proliferation.</text>
</comment>
<comment type="subunit">
    <text evidence="6 7">Self-associates. Interacts with nlz2. May interact with Groucho corepressor proteins.</text>
</comment>
<comment type="subcellular location">
    <subcellularLocation>
        <location evidence="6 7">Nucleus</location>
    </subcellularLocation>
    <subcellularLocation>
        <location evidence="1">Cytoplasm</location>
    </subcellularLocation>
</comment>
<comment type="alternative products">
    <event type="alternative initiation"/>
    <isoform>
        <id>Q90ZE2-1</id>
        <name>1</name>
        <sequence type="displayed"/>
    </isoform>
    <isoform>
        <id>Q90ZE2-2</id>
        <name>2</name>
        <sequence type="described" ref="VSP_026399"/>
    </isoform>
</comment>
<comment type="developmental stage">
    <text evidence="4 5 6 8">Expressed in a caudal domain whose anterior boundary expands from the r3/r4 boundary during late gastrulation to r2 during somitogenesis stages. Also expressed at the midbrain to hindbrain boundary by the 3-somite stage, where expression intensifies by the 6 somite stage. Also expressed in the spinal cord and tailbud.</text>
</comment>
<comment type="similarity">
    <text evidence="10">Belongs to the Elbow/Noc family.</text>
</comment>
<dbReference type="EMBL" id="AF222996">
    <property type="protein sequence ID" value="AAK73547.1"/>
    <property type="molecule type" value="mRNA"/>
</dbReference>
<dbReference type="EMBL" id="AY026937">
    <property type="protein sequence ID" value="AAK08969.1"/>
    <property type="molecule type" value="mRNA"/>
</dbReference>
<dbReference type="EMBL" id="BX927172">
    <property type="protein sequence ID" value="CAK05188.1"/>
    <property type="molecule type" value="Genomic_DNA"/>
</dbReference>
<dbReference type="EMBL" id="BC095600">
    <property type="protein sequence ID" value="AAH95600.1"/>
    <property type="molecule type" value="mRNA"/>
</dbReference>
<dbReference type="RefSeq" id="NP_571897.1">
    <molecule id="Q90ZE2-1"/>
    <property type="nucleotide sequence ID" value="NM_131822.1"/>
</dbReference>
<dbReference type="FunCoup" id="Q90ZE2">
    <property type="interactions" value="1128"/>
</dbReference>
<dbReference type="STRING" id="7955.ENSDARP00000051552"/>
<dbReference type="PaxDb" id="7955-ENSDARP00000051552"/>
<dbReference type="Ensembl" id="ENSDART00000051553">
    <molecule id="Q90ZE2-1"/>
    <property type="protein sequence ID" value="ENSDARP00000051552"/>
    <property type="gene ID" value="ENSDARG00000035563"/>
</dbReference>
<dbReference type="Ensembl" id="ENSDART00000192023">
    <molecule id="Q90ZE2-1"/>
    <property type="protein sequence ID" value="ENSDARP00000149772"/>
    <property type="gene ID" value="ENSDARG00000112912"/>
</dbReference>
<dbReference type="GeneID" id="114429"/>
<dbReference type="KEGG" id="dre:114429"/>
<dbReference type="AGR" id="ZFIN:ZDB-GENE-010717-1"/>
<dbReference type="CTD" id="80139"/>
<dbReference type="ZFIN" id="ZDB-GENE-010717-1">
    <property type="gene designation" value="znf703"/>
</dbReference>
<dbReference type="eggNOG" id="ENOG502QV57">
    <property type="taxonomic scope" value="Eukaryota"/>
</dbReference>
<dbReference type="HOGENOM" id="CLU_035082_1_0_1"/>
<dbReference type="InParanoid" id="Q90ZE2"/>
<dbReference type="OMA" id="SQAPHMD"/>
<dbReference type="OrthoDB" id="10054079at2759"/>
<dbReference type="PhylomeDB" id="Q90ZE2"/>
<dbReference type="TreeFam" id="TF324968"/>
<dbReference type="PRO" id="PR:Q90ZE2"/>
<dbReference type="Proteomes" id="UP000000437">
    <property type="component" value="Alternate scaffold 5"/>
</dbReference>
<dbReference type="Proteomes" id="UP000000437">
    <property type="component" value="Chromosome 5"/>
</dbReference>
<dbReference type="Bgee" id="ENSDARG00000035563">
    <property type="expression patterns" value="Expressed in tail bud paraxial mesoderm and 26 other cell types or tissues"/>
</dbReference>
<dbReference type="ExpressionAtlas" id="Q90ZE2">
    <property type="expression patterns" value="baseline"/>
</dbReference>
<dbReference type="GO" id="GO:0005737">
    <property type="term" value="C:cytoplasm"/>
    <property type="evidence" value="ECO:0000250"/>
    <property type="project" value="UniProtKB"/>
</dbReference>
<dbReference type="GO" id="GO:0000118">
    <property type="term" value="C:histone deacetylase complex"/>
    <property type="evidence" value="ECO:0000314"/>
    <property type="project" value="ZFIN"/>
</dbReference>
<dbReference type="GO" id="GO:0016363">
    <property type="term" value="C:nuclear matrix"/>
    <property type="evidence" value="ECO:0000250"/>
    <property type="project" value="UniProtKB"/>
</dbReference>
<dbReference type="GO" id="GO:0005634">
    <property type="term" value="C:nucleus"/>
    <property type="evidence" value="ECO:0000314"/>
    <property type="project" value="ZFIN"/>
</dbReference>
<dbReference type="GO" id="GO:0003677">
    <property type="term" value="F:DNA binding"/>
    <property type="evidence" value="ECO:0000250"/>
    <property type="project" value="ZFIN"/>
</dbReference>
<dbReference type="GO" id="GO:0042826">
    <property type="term" value="F:histone deacetylase binding"/>
    <property type="evidence" value="ECO:0000314"/>
    <property type="project" value="ZFIN"/>
</dbReference>
<dbReference type="GO" id="GO:0008270">
    <property type="term" value="F:zinc ion binding"/>
    <property type="evidence" value="ECO:0007669"/>
    <property type="project" value="UniProtKB-KW"/>
</dbReference>
<dbReference type="GO" id="GO:0034333">
    <property type="term" value="P:adherens junction assembly"/>
    <property type="evidence" value="ECO:0000250"/>
    <property type="project" value="UniProtKB"/>
</dbReference>
<dbReference type="GO" id="GO:0007420">
    <property type="term" value="P:brain development"/>
    <property type="evidence" value="ECO:0000315"/>
    <property type="project" value="ZFIN"/>
</dbReference>
<dbReference type="GO" id="GO:0060271">
    <property type="term" value="P:cilium assembly"/>
    <property type="evidence" value="ECO:0000315"/>
    <property type="project" value="ZFIN"/>
</dbReference>
<dbReference type="GO" id="GO:0007368">
    <property type="term" value="P:determination of left/right symmetry"/>
    <property type="evidence" value="ECO:0000315"/>
    <property type="project" value="ZFIN"/>
</dbReference>
<dbReference type="GO" id="GO:0048596">
    <property type="term" value="P:embryonic camera-type eye morphogenesis"/>
    <property type="evidence" value="ECO:0000315"/>
    <property type="project" value="ZFIN"/>
</dbReference>
<dbReference type="GO" id="GO:0030902">
    <property type="term" value="P:hindbrain development"/>
    <property type="evidence" value="ECO:0000316"/>
    <property type="project" value="ZFIN"/>
</dbReference>
<dbReference type="GO" id="GO:0045892">
    <property type="term" value="P:negative regulation of DNA-templated transcription"/>
    <property type="evidence" value="ECO:0000315"/>
    <property type="project" value="ZFIN"/>
</dbReference>
<dbReference type="GO" id="GO:0034111">
    <property type="term" value="P:negative regulation of homotypic cell-cell adhesion"/>
    <property type="evidence" value="ECO:0000250"/>
    <property type="project" value="UniProtKB"/>
</dbReference>
<dbReference type="GO" id="GO:0030335">
    <property type="term" value="P:positive regulation of cell migration"/>
    <property type="evidence" value="ECO:0000250"/>
    <property type="project" value="UniProtKB"/>
</dbReference>
<dbReference type="GO" id="GO:0060828">
    <property type="term" value="P:regulation of canonical Wnt signaling pathway"/>
    <property type="evidence" value="ECO:0000250"/>
    <property type="project" value="UniProtKB"/>
</dbReference>
<dbReference type="GO" id="GO:0017015">
    <property type="term" value="P:regulation of transforming growth factor beta receptor signaling pathway"/>
    <property type="evidence" value="ECO:0000250"/>
    <property type="project" value="UniProtKB"/>
</dbReference>
<dbReference type="FunFam" id="3.30.160.60:FF:000129">
    <property type="entry name" value="Zinc finger protein 503"/>
    <property type="match status" value="1"/>
</dbReference>
<dbReference type="Gene3D" id="3.30.160.60">
    <property type="entry name" value="Classic Zinc Finger"/>
    <property type="match status" value="1"/>
</dbReference>
<dbReference type="InterPro" id="IPR051520">
    <property type="entry name" value="Elbow/Noc_ZnFinger"/>
</dbReference>
<dbReference type="InterPro" id="IPR022129">
    <property type="entry name" value="Tscrpt_rep_NocA-like"/>
</dbReference>
<dbReference type="InterPro" id="IPR013087">
    <property type="entry name" value="Znf_C2H2_type"/>
</dbReference>
<dbReference type="PANTHER" id="PTHR12522:SF2">
    <property type="entry name" value="ZINC FINGER PROTEIN 703"/>
    <property type="match status" value="1"/>
</dbReference>
<dbReference type="PANTHER" id="PTHR12522">
    <property type="entry name" value="ZINC-FINGER PROTEIN NOLZ1-RELATED"/>
    <property type="match status" value="1"/>
</dbReference>
<dbReference type="Pfam" id="PF12402">
    <property type="entry name" value="nlz1"/>
    <property type="match status" value="1"/>
</dbReference>
<dbReference type="PROSITE" id="PS50157">
    <property type="entry name" value="ZINC_FINGER_C2H2_2"/>
    <property type="match status" value="1"/>
</dbReference>